<sequence length="235" mass="25684">MNRQLIIAIDGPSGVGKSTLSRRLAQQLRYVNIDTGAMYRCVALAAHRAGLAADDEKSLQALCADMEIRFVRKDGTEKVLLNGEDVSEAIRTPEISLLSSRVSAQPTVRQCMLGLQRQMGEQGGVVLEGRDIGTVVFPSAEVKFFLAATARERGKRRYLELKAKGMDVDLDQTIAEVEARDAADSGRLHAPLRQAEDAVLIDTTCMNIDQVLERMLQVVAERQQVCDPSKEGAAS</sequence>
<keyword id="KW-0067">ATP-binding</keyword>
<keyword id="KW-0963">Cytoplasm</keyword>
<keyword id="KW-0418">Kinase</keyword>
<keyword id="KW-0547">Nucleotide-binding</keyword>
<keyword id="KW-1185">Reference proteome</keyword>
<keyword id="KW-0808">Transferase</keyword>
<feature type="chain" id="PRO_1000048247" description="Cytidylate kinase">
    <location>
        <begin position="1"/>
        <end position="235"/>
    </location>
</feature>
<feature type="binding site" evidence="1">
    <location>
        <begin position="11"/>
        <end position="19"/>
    </location>
    <ligand>
        <name>ATP</name>
        <dbReference type="ChEBI" id="CHEBI:30616"/>
    </ligand>
</feature>
<name>KCY_SYNC1</name>
<comment type="catalytic activity">
    <reaction evidence="1">
        <text>CMP + ATP = CDP + ADP</text>
        <dbReference type="Rhea" id="RHEA:11600"/>
        <dbReference type="ChEBI" id="CHEBI:30616"/>
        <dbReference type="ChEBI" id="CHEBI:58069"/>
        <dbReference type="ChEBI" id="CHEBI:60377"/>
        <dbReference type="ChEBI" id="CHEBI:456216"/>
        <dbReference type="EC" id="2.7.4.25"/>
    </reaction>
</comment>
<comment type="catalytic activity">
    <reaction evidence="1">
        <text>dCMP + ATP = dCDP + ADP</text>
        <dbReference type="Rhea" id="RHEA:25094"/>
        <dbReference type="ChEBI" id="CHEBI:30616"/>
        <dbReference type="ChEBI" id="CHEBI:57566"/>
        <dbReference type="ChEBI" id="CHEBI:58593"/>
        <dbReference type="ChEBI" id="CHEBI:456216"/>
        <dbReference type="EC" id="2.7.4.25"/>
    </reaction>
</comment>
<comment type="subcellular location">
    <subcellularLocation>
        <location evidence="1">Cytoplasm</location>
    </subcellularLocation>
</comment>
<comment type="similarity">
    <text evidence="1">Belongs to the cytidylate kinase family. Type 1 subfamily.</text>
</comment>
<evidence type="ECO:0000255" key="1">
    <source>
        <dbReference type="HAMAP-Rule" id="MF_00238"/>
    </source>
</evidence>
<dbReference type="EC" id="2.7.4.25" evidence="1"/>
<dbReference type="EMBL" id="CP000142">
    <property type="protein sequence ID" value="ABA89125.1"/>
    <property type="molecule type" value="Genomic_DNA"/>
</dbReference>
<dbReference type="RefSeq" id="WP_011341629.1">
    <property type="nucleotide sequence ID" value="NC_007498.2"/>
</dbReference>
<dbReference type="SMR" id="Q3A3D2"/>
<dbReference type="STRING" id="338963.Pcar_1884"/>
<dbReference type="KEGG" id="pca:Pcar_1884"/>
<dbReference type="eggNOG" id="COG0283">
    <property type="taxonomic scope" value="Bacteria"/>
</dbReference>
<dbReference type="HOGENOM" id="CLU_079959_0_2_7"/>
<dbReference type="OrthoDB" id="9807434at2"/>
<dbReference type="Proteomes" id="UP000002534">
    <property type="component" value="Chromosome"/>
</dbReference>
<dbReference type="GO" id="GO:0005829">
    <property type="term" value="C:cytosol"/>
    <property type="evidence" value="ECO:0007669"/>
    <property type="project" value="TreeGrafter"/>
</dbReference>
<dbReference type="GO" id="GO:0005524">
    <property type="term" value="F:ATP binding"/>
    <property type="evidence" value="ECO:0007669"/>
    <property type="project" value="UniProtKB-UniRule"/>
</dbReference>
<dbReference type="GO" id="GO:0036430">
    <property type="term" value="F:CMP kinase activity"/>
    <property type="evidence" value="ECO:0007669"/>
    <property type="project" value="RHEA"/>
</dbReference>
<dbReference type="GO" id="GO:0036431">
    <property type="term" value="F:dCMP kinase activity"/>
    <property type="evidence" value="ECO:0007669"/>
    <property type="project" value="RHEA"/>
</dbReference>
<dbReference type="GO" id="GO:0015949">
    <property type="term" value="P:nucleobase-containing small molecule interconversion"/>
    <property type="evidence" value="ECO:0007669"/>
    <property type="project" value="TreeGrafter"/>
</dbReference>
<dbReference type="GO" id="GO:0006220">
    <property type="term" value="P:pyrimidine nucleotide metabolic process"/>
    <property type="evidence" value="ECO:0007669"/>
    <property type="project" value="UniProtKB-UniRule"/>
</dbReference>
<dbReference type="CDD" id="cd02020">
    <property type="entry name" value="CMPK"/>
    <property type="match status" value="1"/>
</dbReference>
<dbReference type="Gene3D" id="3.40.50.300">
    <property type="entry name" value="P-loop containing nucleotide triphosphate hydrolases"/>
    <property type="match status" value="1"/>
</dbReference>
<dbReference type="HAMAP" id="MF_00238">
    <property type="entry name" value="Cytidyl_kinase_type1"/>
    <property type="match status" value="1"/>
</dbReference>
<dbReference type="InterPro" id="IPR003136">
    <property type="entry name" value="Cytidylate_kin"/>
</dbReference>
<dbReference type="InterPro" id="IPR011994">
    <property type="entry name" value="Cytidylate_kinase_dom"/>
</dbReference>
<dbReference type="InterPro" id="IPR027417">
    <property type="entry name" value="P-loop_NTPase"/>
</dbReference>
<dbReference type="NCBIfam" id="TIGR00017">
    <property type="entry name" value="cmk"/>
    <property type="match status" value="1"/>
</dbReference>
<dbReference type="PANTHER" id="PTHR21299:SF2">
    <property type="entry name" value="CYTIDYLATE KINASE"/>
    <property type="match status" value="1"/>
</dbReference>
<dbReference type="PANTHER" id="PTHR21299">
    <property type="entry name" value="CYTIDYLATE KINASE/PANTOATE-BETA-ALANINE LIGASE"/>
    <property type="match status" value="1"/>
</dbReference>
<dbReference type="Pfam" id="PF02224">
    <property type="entry name" value="Cytidylate_kin"/>
    <property type="match status" value="1"/>
</dbReference>
<dbReference type="SUPFAM" id="SSF52540">
    <property type="entry name" value="P-loop containing nucleoside triphosphate hydrolases"/>
    <property type="match status" value="1"/>
</dbReference>
<organism>
    <name type="scientific">Syntrophotalea carbinolica (strain DSM 2380 / NBRC 103641 / GraBd1)</name>
    <name type="common">Pelobacter carbinolicus</name>
    <dbReference type="NCBI Taxonomy" id="338963"/>
    <lineage>
        <taxon>Bacteria</taxon>
        <taxon>Pseudomonadati</taxon>
        <taxon>Thermodesulfobacteriota</taxon>
        <taxon>Desulfuromonadia</taxon>
        <taxon>Desulfuromonadales</taxon>
        <taxon>Syntrophotaleaceae</taxon>
        <taxon>Syntrophotalea</taxon>
    </lineage>
</organism>
<reference key="1">
    <citation type="submission" date="2005-10" db="EMBL/GenBank/DDBJ databases">
        <title>Complete sequence of Pelobacter carbinolicus DSM 2380.</title>
        <authorList>
            <person name="Copeland A."/>
            <person name="Lucas S."/>
            <person name="Lapidus A."/>
            <person name="Barry K."/>
            <person name="Detter J.C."/>
            <person name="Glavina T."/>
            <person name="Hammon N."/>
            <person name="Israni S."/>
            <person name="Pitluck S."/>
            <person name="Chertkov O."/>
            <person name="Schmutz J."/>
            <person name="Larimer F."/>
            <person name="Land M."/>
            <person name="Kyrpides N."/>
            <person name="Ivanova N."/>
            <person name="Richardson P."/>
        </authorList>
    </citation>
    <scope>NUCLEOTIDE SEQUENCE [LARGE SCALE GENOMIC DNA]</scope>
    <source>
        <strain>DSM 2380 / NBRC 103641 / GraBd1</strain>
    </source>
</reference>
<gene>
    <name evidence="1" type="primary">cmk</name>
    <name type="ordered locus">Pcar_1884</name>
</gene>
<accession>Q3A3D2</accession>
<protein>
    <recommendedName>
        <fullName evidence="1">Cytidylate kinase</fullName>
        <shortName evidence="1">CK</shortName>
        <ecNumber evidence="1">2.7.4.25</ecNumber>
    </recommendedName>
    <alternativeName>
        <fullName evidence="1">Cytidine monophosphate kinase</fullName>
        <shortName evidence="1">CMP kinase</shortName>
    </alternativeName>
</protein>
<proteinExistence type="inferred from homology"/>